<proteinExistence type="inferred from homology"/>
<comment type="function">
    <text evidence="1">Located on the platform of the 30S subunit, it bridges several disparate RNA helices of the 16S rRNA. Forms part of the Shine-Dalgarno cleft in the 70S ribosome.</text>
</comment>
<comment type="subunit">
    <text evidence="1">Part of the 30S ribosomal subunit. Interacts with proteins S7 and S18. Binds to IF-3.</text>
</comment>
<comment type="similarity">
    <text evidence="1">Belongs to the universal ribosomal protein uS11 family.</text>
</comment>
<protein>
    <recommendedName>
        <fullName evidence="1">Small ribosomal subunit protein uS11</fullName>
    </recommendedName>
    <alternativeName>
        <fullName evidence="2">30S ribosomal protein S11</fullName>
    </alternativeName>
</protein>
<sequence length="129" mass="13511">MAKTAAKVRKKVKKNVAEGIAHVHASFNNTIITITDRQGNALSWATSGGAGFKGSRKSTPFAAQVAAEAAGKAAQECGVKNLEVRIKGPGPGRESAVRALNALGMKISSITDITPIPHNGCRPPKKRRI</sequence>
<name>RS11_AROAE</name>
<organism>
    <name type="scientific">Aromatoleum aromaticum (strain DSM 19018 / LMG 30748 / EbN1)</name>
    <name type="common">Azoarcus sp. (strain EbN1)</name>
    <dbReference type="NCBI Taxonomy" id="76114"/>
    <lineage>
        <taxon>Bacteria</taxon>
        <taxon>Pseudomonadati</taxon>
        <taxon>Pseudomonadota</taxon>
        <taxon>Betaproteobacteria</taxon>
        <taxon>Rhodocyclales</taxon>
        <taxon>Rhodocyclaceae</taxon>
        <taxon>Aromatoleum</taxon>
    </lineage>
</organism>
<gene>
    <name evidence="1" type="primary">rpsK</name>
    <name type="ordered locus">AZOSEA21800</name>
    <name type="ORF">ebA3850</name>
</gene>
<reference key="1">
    <citation type="journal article" date="2005" name="Arch. Microbiol.">
        <title>The genome sequence of an anaerobic aromatic-degrading denitrifying bacterium, strain EbN1.</title>
        <authorList>
            <person name="Rabus R."/>
            <person name="Kube M."/>
            <person name="Heider J."/>
            <person name="Beck A."/>
            <person name="Heitmann K."/>
            <person name="Widdel F."/>
            <person name="Reinhardt R."/>
        </authorList>
    </citation>
    <scope>NUCLEOTIDE SEQUENCE [LARGE SCALE GENOMIC DNA]</scope>
    <source>
        <strain>DSM 19018 / LMG 30748 / EbN1</strain>
    </source>
</reference>
<dbReference type="EMBL" id="CR555306">
    <property type="protein sequence ID" value="CAI08305.1"/>
    <property type="molecule type" value="Genomic_DNA"/>
</dbReference>
<dbReference type="RefSeq" id="WP_011237995.1">
    <property type="nucleotide sequence ID" value="NC_006513.1"/>
</dbReference>
<dbReference type="SMR" id="Q5P309"/>
<dbReference type="STRING" id="76114.ebA3850"/>
<dbReference type="KEGG" id="eba:ebA3850"/>
<dbReference type="eggNOG" id="COG0100">
    <property type="taxonomic scope" value="Bacteria"/>
</dbReference>
<dbReference type="HOGENOM" id="CLU_072439_5_0_4"/>
<dbReference type="OrthoDB" id="9806415at2"/>
<dbReference type="Proteomes" id="UP000006552">
    <property type="component" value="Chromosome"/>
</dbReference>
<dbReference type="GO" id="GO:1990904">
    <property type="term" value="C:ribonucleoprotein complex"/>
    <property type="evidence" value="ECO:0007669"/>
    <property type="project" value="UniProtKB-KW"/>
</dbReference>
<dbReference type="GO" id="GO:0005840">
    <property type="term" value="C:ribosome"/>
    <property type="evidence" value="ECO:0007669"/>
    <property type="project" value="UniProtKB-KW"/>
</dbReference>
<dbReference type="GO" id="GO:0019843">
    <property type="term" value="F:rRNA binding"/>
    <property type="evidence" value="ECO:0007669"/>
    <property type="project" value="UniProtKB-UniRule"/>
</dbReference>
<dbReference type="GO" id="GO:0003735">
    <property type="term" value="F:structural constituent of ribosome"/>
    <property type="evidence" value="ECO:0007669"/>
    <property type="project" value="InterPro"/>
</dbReference>
<dbReference type="GO" id="GO:0006412">
    <property type="term" value="P:translation"/>
    <property type="evidence" value="ECO:0007669"/>
    <property type="project" value="UniProtKB-UniRule"/>
</dbReference>
<dbReference type="FunFam" id="3.30.420.80:FF:000001">
    <property type="entry name" value="30S ribosomal protein S11"/>
    <property type="match status" value="1"/>
</dbReference>
<dbReference type="Gene3D" id="3.30.420.80">
    <property type="entry name" value="Ribosomal protein S11"/>
    <property type="match status" value="1"/>
</dbReference>
<dbReference type="HAMAP" id="MF_01310">
    <property type="entry name" value="Ribosomal_uS11"/>
    <property type="match status" value="1"/>
</dbReference>
<dbReference type="InterPro" id="IPR001971">
    <property type="entry name" value="Ribosomal_uS11"/>
</dbReference>
<dbReference type="InterPro" id="IPR019981">
    <property type="entry name" value="Ribosomal_uS11_bac-type"/>
</dbReference>
<dbReference type="InterPro" id="IPR018102">
    <property type="entry name" value="Ribosomal_uS11_CS"/>
</dbReference>
<dbReference type="InterPro" id="IPR036967">
    <property type="entry name" value="Ribosomal_uS11_sf"/>
</dbReference>
<dbReference type="NCBIfam" id="NF003698">
    <property type="entry name" value="PRK05309.1"/>
    <property type="match status" value="1"/>
</dbReference>
<dbReference type="NCBIfam" id="TIGR03632">
    <property type="entry name" value="uS11_bact"/>
    <property type="match status" value="1"/>
</dbReference>
<dbReference type="PANTHER" id="PTHR11759">
    <property type="entry name" value="40S RIBOSOMAL PROTEIN S14/30S RIBOSOMAL PROTEIN S11"/>
    <property type="match status" value="1"/>
</dbReference>
<dbReference type="Pfam" id="PF00411">
    <property type="entry name" value="Ribosomal_S11"/>
    <property type="match status" value="1"/>
</dbReference>
<dbReference type="PIRSF" id="PIRSF002131">
    <property type="entry name" value="Ribosomal_S11"/>
    <property type="match status" value="1"/>
</dbReference>
<dbReference type="SUPFAM" id="SSF53137">
    <property type="entry name" value="Translational machinery components"/>
    <property type="match status" value="1"/>
</dbReference>
<dbReference type="PROSITE" id="PS00054">
    <property type="entry name" value="RIBOSOMAL_S11"/>
    <property type="match status" value="1"/>
</dbReference>
<evidence type="ECO:0000255" key="1">
    <source>
        <dbReference type="HAMAP-Rule" id="MF_01310"/>
    </source>
</evidence>
<evidence type="ECO:0000305" key="2"/>
<feature type="chain" id="PRO_0000230385" description="Small ribosomal subunit protein uS11">
    <location>
        <begin position="1"/>
        <end position="129"/>
    </location>
</feature>
<keyword id="KW-1185">Reference proteome</keyword>
<keyword id="KW-0687">Ribonucleoprotein</keyword>
<keyword id="KW-0689">Ribosomal protein</keyword>
<keyword id="KW-0694">RNA-binding</keyword>
<keyword id="KW-0699">rRNA-binding</keyword>
<accession>Q5P309</accession>